<gene>
    <name evidence="1" type="primary">ICL1</name>
    <name type="ordered locus">DEHA2D12936g</name>
</gene>
<feature type="chain" id="PRO_0000068789" description="Isocitrate lyase">
    <location>
        <begin position="1"/>
        <end position="550"/>
    </location>
</feature>
<feature type="active site" description="Proton acceptor" evidence="3">
    <location>
        <position position="210"/>
    </location>
</feature>
<feature type="binding site" evidence="3">
    <location>
        <begin position="101"/>
        <end position="103"/>
    </location>
    <ligand>
        <name>substrate</name>
    </ligand>
</feature>
<feature type="binding site" evidence="3">
    <location>
        <position position="172"/>
    </location>
    <ligand>
        <name>Mg(2+)</name>
        <dbReference type="ChEBI" id="CHEBI:18420"/>
    </ligand>
</feature>
<feature type="binding site" evidence="3">
    <location>
        <begin position="211"/>
        <end position="212"/>
    </location>
    <ligand>
        <name>substrate</name>
    </ligand>
</feature>
<feature type="binding site" evidence="3">
    <location>
        <position position="247"/>
    </location>
    <ligand>
        <name>substrate</name>
    </ligand>
</feature>
<feature type="binding site" evidence="3">
    <location>
        <begin position="430"/>
        <end position="434"/>
    </location>
    <ligand>
        <name>substrate</name>
    </ligand>
</feature>
<feature type="binding site" evidence="3">
    <location>
        <position position="464"/>
    </location>
    <ligand>
        <name>substrate</name>
    </ligand>
</feature>
<accession>Q6BRY4</accession>
<dbReference type="EC" id="4.1.3.1" evidence="1"/>
<dbReference type="EC" id="4.1.3.30" evidence="1"/>
<dbReference type="EMBL" id="CR382136">
    <property type="protein sequence ID" value="CAG87204.1"/>
    <property type="molecule type" value="Genomic_DNA"/>
</dbReference>
<dbReference type="RefSeq" id="XP_459036.1">
    <property type="nucleotide sequence ID" value="XM_459036.1"/>
</dbReference>
<dbReference type="SMR" id="Q6BRY4"/>
<dbReference type="FunCoup" id="Q6BRY4">
    <property type="interactions" value="195"/>
</dbReference>
<dbReference type="STRING" id="284592.Q6BRY4"/>
<dbReference type="GeneID" id="2901192"/>
<dbReference type="KEGG" id="dha:DEHA2D12936g"/>
<dbReference type="VEuPathDB" id="FungiDB:DEHA2D12936g"/>
<dbReference type="eggNOG" id="KOG1260">
    <property type="taxonomic scope" value="Eukaryota"/>
</dbReference>
<dbReference type="HOGENOM" id="CLU_019214_2_2_1"/>
<dbReference type="InParanoid" id="Q6BRY4"/>
<dbReference type="OMA" id="YVSGWQV"/>
<dbReference type="OrthoDB" id="4078635at2759"/>
<dbReference type="UniPathway" id="UPA00703">
    <property type="reaction ID" value="UER00719"/>
</dbReference>
<dbReference type="Proteomes" id="UP000000599">
    <property type="component" value="Chromosome D"/>
</dbReference>
<dbReference type="GO" id="GO:0009514">
    <property type="term" value="C:glyoxysome"/>
    <property type="evidence" value="ECO:0007669"/>
    <property type="project" value="UniProtKB-SubCell"/>
</dbReference>
<dbReference type="GO" id="GO:0004451">
    <property type="term" value="F:isocitrate lyase activity"/>
    <property type="evidence" value="ECO:0007669"/>
    <property type="project" value="UniProtKB-EC"/>
</dbReference>
<dbReference type="GO" id="GO:0046872">
    <property type="term" value="F:metal ion binding"/>
    <property type="evidence" value="ECO:0007669"/>
    <property type="project" value="UniProtKB-KW"/>
</dbReference>
<dbReference type="GO" id="GO:0046421">
    <property type="term" value="F:methylisocitrate lyase activity"/>
    <property type="evidence" value="ECO:0007669"/>
    <property type="project" value="UniProtKB-EC"/>
</dbReference>
<dbReference type="GO" id="GO:0006097">
    <property type="term" value="P:glyoxylate cycle"/>
    <property type="evidence" value="ECO:0007669"/>
    <property type="project" value="UniProtKB-UniPathway"/>
</dbReference>
<dbReference type="GO" id="GO:0006099">
    <property type="term" value="P:tricarboxylic acid cycle"/>
    <property type="evidence" value="ECO:0007669"/>
    <property type="project" value="UniProtKB-KW"/>
</dbReference>
<dbReference type="CDD" id="cd00377">
    <property type="entry name" value="ICL_PEPM"/>
    <property type="match status" value="1"/>
</dbReference>
<dbReference type="FunFam" id="1.10.10.850:FF:000001">
    <property type="entry name" value="Isocitrate lyase"/>
    <property type="match status" value="1"/>
</dbReference>
<dbReference type="Gene3D" id="1.10.10.850">
    <property type="match status" value="1"/>
</dbReference>
<dbReference type="Gene3D" id="3.20.20.60">
    <property type="entry name" value="Phosphoenolpyruvate-binding domains"/>
    <property type="match status" value="1"/>
</dbReference>
<dbReference type="InterPro" id="IPR039556">
    <property type="entry name" value="ICL/PEPM"/>
</dbReference>
<dbReference type="InterPro" id="IPR006254">
    <property type="entry name" value="Isocitrate_lyase"/>
</dbReference>
<dbReference type="InterPro" id="IPR018523">
    <property type="entry name" value="Isocitrate_lyase_ph_CS"/>
</dbReference>
<dbReference type="InterPro" id="IPR015813">
    <property type="entry name" value="Pyrv/PenolPyrv_kinase-like_dom"/>
</dbReference>
<dbReference type="InterPro" id="IPR040442">
    <property type="entry name" value="Pyrv_kinase-like_dom_sf"/>
</dbReference>
<dbReference type="NCBIfam" id="TIGR01346">
    <property type="entry name" value="isocit_lyase"/>
    <property type="match status" value="1"/>
</dbReference>
<dbReference type="PANTHER" id="PTHR21631:SF3">
    <property type="entry name" value="BIFUNCTIONAL GLYOXYLATE CYCLE PROTEIN"/>
    <property type="match status" value="1"/>
</dbReference>
<dbReference type="PANTHER" id="PTHR21631">
    <property type="entry name" value="ISOCITRATE LYASE/MALATE SYNTHASE"/>
    <property type="match status" value="1"/>
</dbReference>
<dbReference type="Pfam" id="PF00463">
    <property type="entry name" value="ICL"/>
    <property type="match status" value="1"/>
</dbReference>
<dbReference type="PIRSF" id="PIRSF001362">
    <property type="entry name" value="Isocit_lyase"/>
    <property type="match status" value="1"/>
</dbReference>
<dbReference type="SUPFAM" id="SSF51621">
    <property type="entry name" value="Phosphoenolpyruvate/pyruvate domain"/>
    <property type="match status" value="1"/>
</dbReference>
<dbReference type="PROSITE" id="PS00161">
    <property type="entry name" value="ISOCITRATE_LYASE"/>
    <property type="match status" value="1"/>
</dbReference>
<keyword id="KW-0329">Glyoxylate bypass</keyword>
<keyword id="KW-0330">Glyoxysome</keyword>
<keyword id="KW-0456">Lyase</keyword>
<keyword id="KW-0460">Magnesium</keyword>
<keyword id="KW-0479">Metal-binding</keyword>
<keyword id="KW-0576">Peroxisome</keyword>
<keyword id="KW-1185">Reference proteome</keyword>
<keyword id="KW-0816">Tricarboxylic acid cycle</keyword>
<name>ACEA_DEBHA</name>
<comment type="function">
    <text evidence="1">Catalyzes the formation of succinate and glyoxylate from isocitrate, a key step of the glyoxylate cycle, which operates as an anaplerotic route for replenishing the tricarboxylic acid cycle. Required for growth on ethanol or acetate, but dispensable when fermentable carbon sources are available. Also acts on 2-methylisocitrate.</text>
</comment>
<comment type="catalytic activity">
    <reaction evidence="1">
        <text>D-threo-isocitrate = glyoxylate + succinate</text>
        <dbReference type="Rhea" id="RHEA:13245"/>
        <dbReference type="ChEBI" id="CHEBI:15562"/>
        <dbReference type="ChEBI" id="CHEBI:30031"/>
        <dbReference type="ChEBI" id="CHEBI:36655"/>
        <dbReference type="EC" id="4.1.3.1"/>
    </reaction>
</comment>
<comment type="catalytic activity">
    <reaction evidence="1">
        <text>(2S,3R)-3-hydroxybutane-1,2,3-tricarboxylate = pyruvate + succinate</text>
        <dbReference type="Rhea" id="RHEA:16809"/>
        <dbReference type="ChEBI" id="CHEBI:15361"/>
        <dbReference type="ChEBI" id="CHEBI:30031"/>
        <dbReference type="ChEBI" id="CHEBI:57429"/>
        <dbReference type="EC" id="4.1.3.30"/>
    </reaction>
</comment>
<comment type="cofactor">
    <cofactor evidence="3">
        <name>Mg(2+)</name>
        <dbReference type="ChEBI" id="CHEBI:18420"/>
    </cofactor>
</comment>
<comment type="pathway">
    <text>Carbohydrate metabolism; glyoxylate cycle; (S)-malate from isocitrate: step 1/2.</text>
</comment>
<comment type="subunit">
    <text evidence="1">Homotetramer.</text>
</comment>
<comment type="subcellular location">
    <subcellularLocation>
        <location evidence="2">Glyoxysome</location>
    </subcellularLocation>
</comment>
<comment type="similarity">
    <text evidence="4">Belongs to the isocitrate lyase/PEP mutase superfamily. Isocitrate lyase family.</text>
</comment>
<evidence type="ECO:0000250" key="1">
    <source>
        <dbReference type="UniProtKB" id="P28240"/>
    </source>
</evidence>
<evidence type="ECO:0000250" key="2">
    <source>
        <dbReference type="UniProtKB" id="P28299"/>
    </source>
</evidence>
<evidence type="ECO:0000250" key="3">
    <source>
        <dbReference type="UniProtKB" id="P9WKK7"/>
    </source>
</evidence>
<evidence type="ECO:0000305" key="4"/>
<sequence length="550" mass="61776">MPYTKIDVNEEEKFFQDQVKEIQQWWKEPRWAKTKRIYQAEDIAKKRSSLKVDYPSSNQAKKLYKLLQEHDKNKSASFTFGALDPVQVTQMAKYLDSIYVSGWQCSSTASTSNEPSPDLADYPMDTVPNKVEHLWFAQLFHDRKQREERLNLSKEERAKTPYTDFLRPIIADADTGHGGITAILKLTKLFVERGAAGIHIEDQAPGTKKCGHMAGKVLVPVQEHINRLVAIRASADILGSDLLCVARTDSEAATLLTSTIDHRDHYFVLGATNPESPDLAALMAEAESNGIYGDKLASIEVEWTKKAGLKLFHEAVIDEINNGNFSNKQALIKKFTDKVNPLSATSNKEARKLAREILGKDVFFDWDVARAREGYYRYQGGTQCAVMRGQAYAPYADMIWMESALPDFKQAKEFAEGVKAKWPDQWLAYNLSPSFNWNRAMPPNEQETYIKRLSELGYVWQFITLAGLHTTALAVDDFANQYSQIGMRAYGQTIQAPEIEKGVEVVKHQKWSGAEYIDGLLKMVTGGVSSTAAMGAGVTEDQFKEKAAGK</sequence>
<protein>
    <recommendedName>
        <fullName evidence="1">Isocitrate lyase</fullName>
        <shortName evidence="4">ICL</shortName>
        <shortName evidence="4">Isocitrase</shortName>
        <shortName evidence="4">Isocitratase</shortName>
        <ecNumber evidence="1">4.1.3.1</ecNumber>
    </recommendedName>
    <alternativeName>
        <fullName evidence="1">Methylisocitrate lyase</fullName>
        <shortName evidence="4">MICA</shortName>
        <ecNumber evidence="1">4.1.3.30</ecNumber>
    </alternativeName>
    <alternativeName>
        <fullName evidence="4">Threo-D(S)-isocitrate glyoxylate-lyase</fullName>
    </alternativeName>
</protein>
<organism>
    <name type="scientific">Debaryomyces hansenii (strain ATCC 36239 / CBS 767 / BCRC 21394 / JCM 1990 / NBRC 0083 / IGC 2968)</name>
    <name type="common">Yeast</name>
    <name type="synonym">Torulaspora hansenii</name>
    <dbReference type="NCBI Taxonomy" id="284592"/>
    <lineage>
        <taxon>Eukaryota</taxon>
        <taxon>Fungi</taxon>
        <taxon>Dikarya</taxon>
        <taxon>Ascomycota</taxon>
        <taxon>Saccharomycotina</taxon>
        <taxon>Pichiomycetes</taxon>
        <taxon>Debaryomycetaceae</taxon>
        <taxon>Debaryomyces</taxon>
    </lineage>
</organism>
<proteinExistence type="inferred from homology"/>
<reference key="1">
    <citation type="journal article" date="2004" name="Nature">
        <title>Genome evolution in yeasts.</title>
        <authorList>
            <person name="Dujon B."/>
            <person name="Sherman D."/>
            <person name="Fischer G."/>
            <person name="Durrens P."/>
            <person name="Casaregola S."/>
            <person name="Lafontaine I."/>
            <person name="de Montigny J."/>
            <person name="Marck C."/>
            <person name="Neuveglise C."/>
            <person name="Talla E."/>
            <person name="Goffard N."/>
            <person name="Frangeul L."/>
            <person name="Aigle M."/>
            <person name="Anthouard V."/>
            <person name="Babour A."/>
            <person name="Barbe V."/>
            <person name="Barnay S."/>
            <person name="Blanchin S."/>
            <person name="Beckerich J.-M."/>
            <person name="Beyne E."/>
            <person name="Bleykasten C."/>
            <person name="Boisrame A."/>
            <person name="Boyer J."/>
            <person name="Cattolico L."/>
            <person name="Confanioleri F."/>
            <person name="de Daruvar A."/>
            <person name="Despons L."/>
            <person name="Fabre E."/>
            <person name="Fairhead C."/>
            <person name="Ferry-Dumazet H."/>
            <person name="Groppi A."/>
            <person name="Hantraye F."/>
            <person name="Hennequin C."/>
            <person name="Jauniaux N."/>
            <person name="Joyet P."/>
            <person name="Kachouri R."/>
            <person name="Kerrest A."/>
            <person name="Koszul R."/>
            <person name="Lemaire M."/>
            <person name="Lesur I."/>
            <person name="Ma L."/>
            <person name="Muller H."/>
            <person name="Nicaud J.-M."/>
            <person name="Nikolski M."/>
            <person name="Oztas S."/>
            <person name="Ozier-Kalogeropoulos O."/>
            <person name="Pellenz S."/>
            <person name="Potier S."/>
            <person name="Richard G.-F."/>
            <person name="Straub M.-L."/>
            <person name="Suleau A."/>
            <person name="Swennen D."/>
            <person name="Tekaia F."/>
            <person name="Wesolowski-Louvel M."/>
            <person name="Westhof E."/>
            <person name="Wirth B."/>
            <person name="Zeniou-Meyer M."/>
            <person name="Zivanovic Y."/>
            <person name="Bolotin-Fukuhara M."/>
            <person name="Thierry A."/>
            <person name="Bouchier C."/>
            <person name="Caudron B."/>
            <person name="Scarpelli C."/>
            <person name="Gaillardin C."/>
            <person name="Weissenbach J."/>
            <person name="Wincker P."/>
            <person name="Souciet J.-L."/>
        </authorList>
    </citation>
    <scope>NUCLEOTIDE SEQUENCE [LARGE SCALE GENOMIC DNA]</scope>
    <source>
        <strain>ATCC 36239 / CBS 767 / BCRC 21394 / JCM 1990 / NBRC 0083 / IGC 2968</strain>
    </source>
</reference>